<feature type="transit peptide" description="Mitochondrion">
    <location>
        <begin position="1"/>
        <end position="32"/>
    </location>
</feature>
<feature type="chain" id="PRO_0000005012" description="Chaperonin CPN60-2, mitochondrial">
    <location>
        <begin position="33"/>
        <end position="575"/>
    </location>
</feature>
<sequence length="575" mass="61130">MHRFASGLASKARLARKGANQIASRSSWSRNYAAKDVKFGVEARGLMLKGVEDLADAVKVTMGPKGRNVVIEQSYGAPKVTKDGVTVAKSIEFKDKVKNVGASLVKQVANATNDVAGDGTTCATILTRAIFTEGCKSVAAGMNAMDLRRGISMAVDSVVTNLKSRARMISTSEEIAQVGTISANGEREIGELIAKAMEKVGKEGVITISDGKTLFNELEVVEGMKLDRGYISPYFITNQKNQKCELDDPLILIHEKKISSINSVVKVLELALKRQRPLLIVSEDVESDALATLILNKLRAGIKVCAIKAPGFGENRKAGLHDLAVLTGGQLITEELGMNLEKVDLDMLGSCKKITISKDDTVILDGAGDKKSIEERCEQIRSAIELSTSDYDKEKLQERLAKLSGGVAVLKIGGASEAEVGEKKDRVTDALNATKAAVEEGIVPGGGVALLYASKELDKLSTANFDQKIGVQIIQNALKTPVHTIASNAGVEGAVVVGKLLEQDNPDLGYDAAKGEYVDMIKAGIIDPLKVIRTALVDAASVSSLMTTTEAIVVELPKDEKEVPAMGGGMGGMDY</sequence>
<gene>
    <name type="primary">CPN60-2</name>
</gene>
<proteinExistence type="evidence at protein level"/>
<organism>
    <name type="scientific">Cucurbita maxima</name>
    <name type="common">Pumpkin</name>
    <name type="synonym">Winter squash</name>
    <dbReference type="NCBI Taxonomy" id="3661"/>
    <lineage>
        <taxon>Eukaryota</taxon>
        <taxon>Viridiplantae</taxon>
        <taxon>Streptophyta</taxon>
        <taxon>Embryophyta</taxon>
        <taxon>Tracheophyta</taxon>
        <taxon>Spermatophyta</taxon>
        <taxon>Magnoliopsida</taxon>
        <taxon>eudicotyledons</taxon>
        <taxon>Gunneridae</taxon>
        <taxon>Pentapetalae</taxon>
        <taxon>rosids</taxon>
        <taxon>fabids</taxon>
        <taxon>Cucurbitales</taxon>
        <taxon>Cucurbitaceae</taxon>
        <taxon>Cucurbiteae</taxon>
        <taxon>Cucurbita</taxon>
    </lineage>
</organism>
<keyword id="KW-0067">ATP-binding</keyword>
<keyword id="KW-0143">Chaperone</keyword>
<keyword id="KW-0903">Direct protein sequencing</keyword>
<keyword id="KW-0496">Mitochondrion</keyword>
<keyword id="KW-0547">Nucleotide-binding</keyword>
<keyword id="KW-1185">Reference proteome</keyword>
<keyword id="KW-0346">Stress response</keyword>
<keyword id="KW-0809">Transit peptide</keyword>
<dbReference type="EMBL" id="X70868">
    <property type="protein sequence ID" value="CAA50218.1"/>
    <property type="molecule type" value="mRNA"/>
</dbReference>
<dbReference type="SMR" id="Q05046"/>
<dbReference type="OrthoDB" id="1733909at2759"/>
<dbReference type="Proteomes" id="UP000504608">
    <property type="component" value="Unplaced"/>
</dbReference>
<dbReference type="GO" id="GO:0005739">
    <property type="term" value="C:mitochondrion"/>
    <property type="evidence" value="ECO:0007669"/>
    <property type="project" value="UniProtKB-SubCell"/>
</dbReference>
<dbReference type="GO" id="GO:0005524">
    <property type="term" value="F:ATP binding"/>
    <property type="evidence" value="ECO:0007669"/>
    <property type="project" value="UniProtKB-KW"/>
</dbReference>
<dbReference type="GO" id="GO:0140662">
    <property type="term" value="F:ATP-dependent protein folding chaperone"/>
    <property type="evidence" value="ECO:0007669"/>
    <property type="project" value="InterPro"/>
</dbReference>
<dbReference type="GO" id="GO:0042026">
    <property type="term" value="P:protein refolding"/>
    <property type="evidence" value="ECO:0007669"/>
    <property type="project" value="InterPro"/>
</dbReference>
<dbReference type="CDD" id="cd03344">
    <property type="entry name" value="GroEL"/>
    <property type="match status" value="1"/>
</dbReference>
<dbReference type="FunFam" id="1.10.560.10:FF:000001">
    <property type="entry name" value="60 kDa chaperonin"/>
    <property type="match status" value="1"/>
</dbReference>
<dbReference type="FunFam" id="3.50.7.10:FF:000001">
    <property type="entry name" value="60 kDa chaperonin"/>
    <property type="match status" value="1"/>
</dbReference>
<dbReference type="Gene3D" id="3.50.7.10">
    <property type="entry name" value="GroEL"/>
    <property type="match status" value="1"/>
</dbReference>
<dbReference type="Gene3D" id="1.10.560.10">
    <property type="entry name" value="GroEL-like equatorial domain"/>
    <property type="match status" value="1"/>
</dbReference>
<dbReference type="Gene3D" id="3.30.260.10">
    <property type="entry name" value="TCP-1-like chaperonin intermediate domain"/>
    <property type="match status" value="1"/>
</dbReference>
<dbReference type="HAMAP" id="MF_00600">
    <property type="entry name" value="CH60"/>
    <property type="match status" value="1"/>
</dbReference>
<dbReference type="InterPro" id="IPR018370">
    <property type="entry name" value="Chaperonin_Cpn60_CS"/>
</dbReference>
<dbReference type="InterPro" id="IPR001844">
    <property type="entry name" value="Cpn60/GroEL"/>
</dbReference>
<dbReference type="InterPro" id="IPR002423">
    <property type="entry name" value="Cpn60/GroEL/TCP-1"/>
</dbReference>
<dbReference type="InterPro" id="IPR027409">
    <property type="entry name" value="GroEL-like_apical_dom_sf"/>
</dbReference>
<dbReference type="InterPro" id="IPR027413">
    <property type="entry name" value="GROEL-like_equatorial_sf"/>
</dbReference>
<dbReference type="InterPro" id="IPR027410">
    <property type="entry name" value="TCP-1-like_intermed_sf"/>
</dbReference>
<dbReference type="NCBIfam" id="TIGR02348">
    <property type="entry name" value="GroEL"/>
    <property type="match status" value="1"/>
</dbReference>
<dbReference type="NCBIfam" id="NF000592">
    <property type="entry name" value="PRK00013.1"/>
    <property type="match status" value="1"/>
</dbReference>
<dbReference type="NCBIfam" id="NF009487">
    <property type="entry name" value="PRK12849.1"/>
    <property type="match status" value="1"/>
</dbReference>
<dbReference type="NCBIfam" id="NF009488">
    <property type="entry name" value="PRK12850.1"/>
    <property type="match status" value="1"/>
</dbReference>
<dbReference type="NCBIfam" id="NF009489">
    <property type="entry name" value="PRK12851.1"/>
    <property type="match status" value="1"/>
</dbReference>
<dbReference type="PANTHER" id="PTHR45633">
    <property type="entry name" value="60 KDA HEAT SHOCK PROTEIN, MITOCHONDRIAL"/>
    <property type="match status" value="1"/>
</dbReference>
<dbReference type="Pfam" id="PF00118">
    <property type="entry name" value="Cpn60_TCP1"/>
    <property type="match status" value="1"/>
</dbReference>
<dbReference type="PRINTS" id="PR00298">
    <property type="entry name" value="CHAPERONIN60"/>
</dbReference>
<dbReference type="SUPFAM" id="SSF52029">
    <property type="entry name" value="GroEL apical domain-like"/>
    <property type="match status" value="1"/>
</dbReference>
<dbReference type="SUPFAM" id="SSF48592">
    <property type="entry name" value="GroEL equatorial domain-like"/>
    <property type="match status" value="1"/>
</dbReference>
<dbReference type="SUPFAM" id="SSF54849">
    <property type="entry name" value="GroEL-intermediate domain like"/>
    <property type="match status" value="1"/>
</dbReference>
<dbReference type="PROSITE" id="PS00296">
    <property type="entry name" value="CHAPERONINS_CPN60"/>
    <property type="match status" value="1"/>
</dbReference>
<accession>Q05046</accession>
<evidence type="ECO:0000305" key="1"/>
<comment type="function">
    <text>Implicated in mitochondrial protein import and macromolecular assembly. May facilitate the correct folding of imported proteins. May also prevent misfolding and promote the refolding and proper assembly of unfolded polypeptides generated under stress conditions in the mitochondrial matrix.</text>
</comment>
<comment type="subcellular location">
    <subcellularLocation>
        <location>Mitochondrion</location>
    </subcellularLocation>
</comment>
<comment type="induction">
    <text>By heat shock.</text>
</comment>
<comment type="similarity">
    <text evidence="1">Belongs to the chaperonin (HSP60) family.</text>
</comment>
<reference key="1">
    <citation type="journal article" date="1992" name="Eur. J. Biochem.">
        <title>Purification, cDNA cloning and Northern-blot analysis of mitochondrial chaperonin 60 from pumpkin cotyledons.</title>
        <authorList>
            <person name="Tsugeki R."/>
            <person name="Mori H."/>
            <person name="Nishimura M."/>
        </authorList>
    </citation>
    <scope>NUCLEOTIDE SEQUENCE [MRNA]</scope>
    <scope>PARTIAL PROTEIN SEQUENCE</scope>
    <source>
        <tissue>Cotyledon</tissue>
    </source>
</reference>
<protein>
    <recommendedName>
        <fullName>Chaperonin CPN60-2, mitochondrial</fullName>
    </recommendedName>
    <alternativeName>
        <fullName>HSP60-2</fullName>
    </alternativeName>
</protein>
<name>CH62_CUCMA</name>